<evidence type="ECO:0000255" key="1">
    <source>
        <dbReference type="HAMAP-Rule" id="MF_00375"/>
    </source>
</evidence>
<gene>
    <name evidence="1" type="primary">hemL</name>
    <name type="ordered locus">CbuK_0182</name>
</gene>
<reference key="1">
    <citation type="journal article" date="2009" name="Infect. Immun.">
        <title>Comparative genomics reveal extensive transposon-mediated genomic plasticity and diversity among potential effector proteins within the genus Coxiella.</title>
        <authorList>
            <person name="Beare P.A."/>
            <person name="Unsworth N."/>
            <person name="Andoh M."/>
            <person name="Voth D.E."/>
            <person name="Omsland A."/>
            <person name="Gilk S.D."/>
            <person name="Williams K.P."/>
            <person name="Sobral B.W."/>
            <person name="Kupko J.J. III"/>
            <person name="Porcella S.F."/>
            <person name="Samuel J.E."/>
            <person name="Heinzen R.A."/>
        </authorList>
    </citation>
    <scope>NUCLEOTIDE SEQUENCE [LARGE SCALE GENOMIC DNA]</scope>
    <source>
        <strain>CbuK_Q154</strain>
    </source>
</reference>
<protein>
    <recommendedName>
        <fullName evidence="1">Glutamate-1-semialdehyde 2,1-aminomutase</fullName>
        <shortName evidence="1">GSA</shortName>
        <ecNumber evidence="1">5.4.3.8</ecNumber>
    </recommendedName>
    <alternativeName>
        <fullName evidence="1">Glutamate-1-semialdehyde aminotransferase</fullName>
        <shortName evidence="1">GSA-AT</shortName>
    </alternativeName>
</protein>
<name>GSA_COXB1</name>
<sequence length="435" mass="46473">MVDHSAALFNKAQNYMPGGVNSPVRAFGAVGGVPRFIKKASGPYLIDVDEKKYIDYVGSWGPMILGHAHPAVIQAAQEAVQNGLSFGAPCENEIKLAALIGEFMPSIEKVRMVNSGTEATMSALRLARGVTGRSKIIKFEGCYHGHADCLLVNAGSGALTFGMPSSPGVPLGTVQDTLTATFNDLDSVAALFEKYSKDIAAIIVEPIAGNMNLIPAAPDFLTGLRELCNQYGSLLIFDEVITGFRVAKGGAQSLYNIRPDLTALGKIIGGGMPVGAYGGRREIMNQLSPEGPVYQAGTLSGNPVAMAAGLATLKELTAENFYSNLKEKTERLVMGILSRAKAAKIPLTANFSCGIFGLIFTSEERVTRYAQAVNGNVEHFRSFFHKMLDNGVYLAPSAFESGFISAAHTNKEVDKTLDIIENIFSVSETYLRISV</sequence>
<proteinExistence type="inferred from homology"/>
<keyword id="KW-0963">Cytoplasm</keyword>
<keyword id="KW-0413">Isomerase</keyword>
<keyword id="KW-0627">Porphyrin biosynthesis</keyword>
<keyword id="KW-0663">Pyridoxal phosphate</keyword>
<organism>
    <name type="scientific">Coxiella burnetii (strain CbuK_Q154)</name>
    <name type="common">Coxiella burnetii (strain Q154)</name>
    <dbReference type="NCBI Taxonomy" id="434924"/>
    <lineage>
        <taxon>Bacteria</taxon>
        <taxon>Pseudomonadati</taxon>
        <taxon>Pseudomonadota</taxon>
        <taxon>Gammaproteobacteria</taxon>
        <taxon>Legionellales</taxon>
        <taxon>Coxiellaceae</taxon>
        <taxon>Coxiella</taxon>
    </lineage>
</organism>
<dbReference type="EC" id="5.4.3.8" evidence="1"/>
<dbReference type="EMBL" id="CP001020">
    <property type="protein sequence ID" value="ACJ19499.1"/>
    <property type="molecule type" value="Genomic_DNA"/>
</dbReference>
<dbReference type="RefSeq" id="WP_005770290.1">
    <property type="nucleotide sequence ID" value="NC_011528.1"/>
</dbReference>
<dbReference type="SMR" id="B6J495"/>
<dbReference type="KEGG" id="cbc:CbuK_0182"/>
<dbReference type="HOGENOM" id="CLU_016922_1_5_6"/>
<dbReference type="UniPathway" id="UPA00251">
    <property type="reaction ID" value="UER00317"/>
</dbReference>
<dbReference type="GO" id="GO:0005737">
    <property type="term" value="C:cytoplasm"/>
    <property type="evidence" value="ECO:0007669"/>
    <property type="project" value="UniProtKB-SubCell"/>
</dbReference>
<dbReference type="GO" id="GO:0042286">
    <property type="term" value="F:glutamate-1-semialdehyde 2,1-aminomutase activity"/>
    <property type="evidence" value="ECO:0007669"/>
    <property type="project" value="UniProtKB-UniRule"/>
</dbReference>
<dbReference type="GO" id="GO:0030170">
    <property type="term" value="F:pyridoxal phosphate binding"/>
    <property type="evidence" value="ECO:0007669"/>
    <property type="project" value="InterPro"/>
</dbReference>
<dbReference type="GO" id="GO:0008483">
    <property type="term" value="F:transaminase activity"/>
    <property type="evidence" value="ECO:0007669"/>
    <property type="project" value="InterPro"/>
</dbReference>
<dbReference type="GO" id="GO:0006782">
    <property type="term" value="P:protoporphyrinogen IX biosynthetic process"/>
    <property type="evidence" value="ECO:0007669"/>
    <property type="project" value="UniProtKB-UniRule"/>
</dbReference>
<dbReference type="CDD" id="cd00610">
    <property type="entry name" value="OAT_like"/>
    <property type="match status" value="1"/>
</dbReference>
<dbReference type="FunFam" id="3.40.640.10:FF:000021">
    <property type="entry name" value="Glutamate-1-semialdehyde 2,1-aminomutase"/>
    <property type="match status" value="1"/>
</dbReference>
<dbReference type="Gene3D" id="3.90.1150.10">
    <property type="entry name" value="Aspartate Aminotransferase, domain 1"/>
    <property type="match status" value="1"/>
</dbReference>
<dbReference type="Gene3D" id="3.40.640.10">
    <property type="entry name" value="Type I PLP-dependent aspartate aminotransferase-like (Major domain)"/>
    <property type="match status" value="1"/>
</dbReference>
<dbReference type="HAMAP" id="MF_00375">
    <property type="entry name" value="HemL_aminotrans_3"/>
    <property type="match status" value="1"/>
</dbReference>
<dbReference type="InterPro" id="IPR004639">
    <property type="entry name" value="4pyrrol_synth_GluAld_NH2Trfase"/>
</dbReference>
<dbReference type="InterPro" id="IPR005814">
    <property type="entry name" value="Aminotrans_3"/>
</dbReference>
<dbReference type="InterPro" id="IPR049704">
    <property type="entry name" value="Aminotrans_3_PPA_site"/>
</dbReference>
<dbReference type="InterPro" id="IPR015424">
    <property type="entry name" value="PyrdxlP-dep_Trfase"/>
</dbReference>
<dbReference type="InterPro" id="IPR015421">
    <property type="entry name" value="PyrdxlP-dep_Trfase_major"/>
</dbReference>
<dbReference type="InterPro" id="IPR015422">
    <property type="entry name" value="PyrdxlP-dep_Trfase_small"/>
</dbReference>
<dbReference type="NCBIfam" id="TIGR00713">
    <property type="entry name" value="hemL"/>
    <property type="match status" value="1"/>
</dbReference>
<dbReference type="NCBIfam" id="NF000818">
    <property type="entry name" value="PRK00062.1"/>
    <property type="match status" value="1"/>
</dbReference>
<dbReference type="PANTHER" id="PTHR43713">
    <property type="entry name" value="GLUTAMATE-1-SEMIALDEHYDE 2,1-AMINOMUTASE"/>
    <property type="match status" value="1"/>
</dbReference>
<dbReference type="PANTHER" id="PTHR43713:SF3">
    <property type="entry name" value="GLUTAMATE-1-SEMIALDEHYDE 2,1-AMINOMUTASE 1, CHLOROPLASTIC-RELATED"/>
    <property type="match status" value="1"/>
</dbReference>
<dbReference type="Pfam" id="PF00202">
    <property type="entry name" value="Aminotran_3"/>
    <property type="match status" value="1"/>
</dbReference>
<dbReference type="SUPFAM" id="SSF53383">
    <property type="entry name" value="PLP-dependent transferases"/>
    <property type="match status" value="1"/>
</dbReference>
<dbReference type="PROSITE" id="PS00600">
    <property type="entry name" value="AA_TRANSFER_CLASS_3"/>
    <property type="match status" value="1"/>
</dbReference>
<feature type="chain" id="PRO_1000121872" description="Glutamate-1-semialdehyde 2,1-aminomutase">
    <location>
        <begin position="1"/>
        <end position="435"/>
    </location>
</feature>
<feature type="modified residue" description="N6-(pyridoxal phosphate)lysine" evidence="1">
    <location>
        <position position="266"/>
    </location>
</feature>
<comment type="catalytic activity">
    <reaction evidence="1">
        <text>(S)-4-amino-5-oxopentanoate = 5-aminolevulinate</text>
        <dbReference type="Rhea" id="RHEA:14265"/>
        <dbReference type="ChEBI" id="CHEBI:57501"/>
        <dbReference type="ChEBI" id="CHEBI:356416"/>
        <dbReference type="EC" id="5.4.3.8"/>
    </reaction>
</comment>
<comment type="cofactor">
    <cofactor evidence="1">
        <name>pyridoxal 5'-phosphate</name>
        <dbReference type="ChEBI" id="CHEBI:597326"/>
    </cofactor>
</comment>
<comment type="pathway">
    <text evidence="1">Porphyrin-containing compound metabolism; protoporphyrin-IX biosynthesis; 5-aminolevulinate from L-glutamyl-tRNA(Glu): step 2/2.</text>
</comment>
<comment type="subunit">
    <text evidence="1">Homodimer.</text>
</comment>
<comment type="subcellular location">
    <subcellularLocation>
        <location evidence="1">Cytoplasm</location>
    </subcellularLocation>
</comment>
<comment type="similarity">
    <text evidence="1">Belongs to the class-III pyridoxal-phosphate-dependent aminotransferase family. HemL subfamily.</text>
</comment>
<accession>B6J495</accession>